<comment type="function">
    <text evidence="1">NDH-1 shuttles electrons from NADH, via FMN and iron-sulfur (Fe-S) centers, to quinones in the respiratory chain. The immediate electron acceptor for the enzyme in this species is believed to be ubiquinone. Couples the redox reaction to proton translocation (for every two electrons transferred, four hydrogen ions are translocated across the cytoplasmic membrane), and thus conserves the redox energy in a proton gradient (By similarity).</text>
</comment>
<comment type="catalytic activity">
    <reaction>
        <text>a quinone + NADH + 5 H(+)(in) = a quinol + NAD(+) + 4 H(+)(out)</text>
        <dbReference type="Rhea" id="RHEA:57888"/>
        <dbReference type="ChEBI" id="CHEBI:15378"/>
        <dbReference type="ChEBI" id="CHEBI:24646"/>
        <dbReference type="ChEBI" id="CHEBI:57540"/>
        <dbReference type="ChEBI" id="CHEBI:57945"/>
        <dbReference type="ChEBI" id="CHEBI:132124"/>
    </reaction>
</comment>
<comment type="subcellular location">
    <subcellularLocation>
        <location evidence="3">Cell membrane</location>
        <topology evidence="3">Multi-pass membrane protein</topology>
    </subcellularLocation>
</comment>
<comment type="similarity">
    <text evidence="3">Belongs to the complex I subunit 5 family.</text>
</comment>
<feature type="chain" id="PRO_0000118219" description="NADH-quinone oxidoreductase subunit L">
    <location>
        <begin position="1"/>
        <end position="674"/>
    </location>
</feature>
<feature type="transmembrane region" description="Helical" evidence="2">
    <location>
        <begin position="4"/>
        <end position="24"/>
    </location>
</feature>
<feature type="transmembrane region" description="Helical" evidence="2">
    <location>
        <begin position="36"/>
        <end position="56"/>
    </location>
</feature>
<feature type="transmembrane region" description="Helical" evidence="2">
    <location>
        <begin position="67"/>
        <end position="87"/>
    </location>
</feature>
<feature type="transmembrane region" description="Helical" evidence="2">
    <location>
        <begin position="90"/>
        <end position="110"/>
    </location>
</feature>
<feature type="transmembrane region" description="Helical" evidence="2">
    <location>
        <begin position="115"/>
        <end position="135"/>
    </location>
</feature>
<feature type="transmembrane region" description="Helical" evidence="2">
    <location>
        <begin position="140"/>
        <end position="160"/>
    </location>
</feature>
<feature type="transmembrane region" description="Helical" evidence="2">
    <location>
        <begin position="180"/>
        <end position="200"/>
    </location>
</feature>
<feature type="transmembrane region" description="Helical" evidence="2">
    <location>
        <begin position="219"/>
        <end position="239"/>
    </location>
</feature>
<feature type="transmembrane region" description="Helical" evidence="2">
    <location>
        <begin position="259"/>
        <end position="279"/>
    </location>
</feature>
<feature type="transmembrane region" description="Helical" evidence="2">
    <location>
        <begin position="293"/>
        <end position="313"/>
    </location>
</feature>
<feature type="transmembrane region" description="Helical" evidence="2">
    <location>
        <begin position="348"/>
        <end position="368"/>
    </location>
</feature>
<feature type="transmembrane region" description="Helical" evidence="2">
    <location>
        <begin position="385"/>
        <end position="405"/>
    </location>
</feature>
<feature type="transmembrane region" description="Helical" evidence="2">
    <location>
        <begin position="425"/>
        <end position="445"/>
    </location>
</feature>
<feature type="transmembrane region" description="Helical" evidence="2">
    <location>
        <begin position="488"/>
        <end position="508"/>
    </location>
</feature>
<feature type="transmembrane region" description="Helical" evidence="2">
    <location>
        <begin position="549"/>
        <end position="569"/>
    </location>
</feature>
<feature type="transmembrane region" description="Helical" evidence="2">
    <location>
        <begin position="653"/>
        <end position="673"/>
    </location>
</feature>
<reference key="1">
    <citation type="journal article" date="2000" name="Nature">
        <title>Complete DNA sequence of a serogroup A strain of Neisseria meningitidis Z2491.</title>
        <authorList>
            <person name="Parkhill J."/>
            <person name="Achtman M."/>
            <person name="James K.D."/>
            <person name="Bentley S.D."/>
            <person name="Churcher C.M."/>
            <person name="Klee S.R."/>
            <person name="Morelli G."/>
            <person name="Basham D."/>
            <person name="Brown D."/>
            <person name="Chillingworth T."/>
            <person name="Davies R.M."/>
            <person name="Davis P."/>
            <person name="Devlin K."/>
            <person name="Feltwell T."/>
            <person name="Hamlin N."/>
            <person name="Holroyd S."/>
            <person name="Jagels K."/>
            <person name="Leather S."/>
            <person name="Moule S."/>
            <person name="Mungall K.L."/>
            <person name="Quail M.A."/>
            <person name="Rajandream M.A."/>
            <person name="Rutherford K.M."/>
            <person name="Simmonds M."/>
            <person name="Skelton J."/>
            <person name="Whitehead S."/>
            <person name="Spratt B.G."/>
            <person name="Barrell B.G."/>
        </authorList>
    </citation>
    <scope>NUCLEOTIDE SEQUENCE [LARGE SCALE GENOMIC DNA]</scope>
    <source>
        <strain>DSM 15465 / Z2491</strain>
    </source>
</reference>
<dbReference type="EC" id="7.1.1.-"/>
<dbReference type="EMBL" id="AL157959">
    <property type="protein sequence ID" value="CAM07331.1"/>
    <property type="molecule type" value="Genomic_DNA"/>
</dbReference>
<dbReference type="PIR" id="F81990">
    <property type="entry name" value="F81990"/>
</dbReference>
<dbReference type="RefSeq" id="WP_002245830.1">
    <property type="nucleotide sequence ID" value="NC_003116.1"/>
</dbReference>
<dbReference type="SMR" id="Q9JX92"/>
<dbReference type="EnsemblBacteria" id="CAM07331">
    <property type="protein sequence ID" value="CAM07331"/>
    <property type="gene ID" value="NMA0002"/>
</dbReference>
<dbReference type="GeneID" id="93387344"/>
<dbReference type="KEGG" id="nma:NMA0002"/>
<dbReference type="HOGENOM" id="CLU_007100_6_0_4"/>
<dbReference type="Proteomes" id="UP000000626">
    <property type="component" value="Chromosome"/>
</dbReference>
<dbReference type="GO" id="GO:0005886">
    <property type="term" value="C:plasma membrane"/>
    <property type="evidence" value="ECO:0007669"/>
    <property type="project" value="UniProtKB-SubCell"/>
</dbReference>
<dbReference type="GO" id="GO:0008137">
    <property type="term" value="F:NADH dehydrogenase (ubiquinone) activity"/>
    <property type="evidence" value="ECO:0007669"/>
    <property type="project" value="InterPro"/>
</dbReference>
<dbReference type="GO" id="GO:0048038">
    <property type="term" value="F:quinone binding"/>
    <property type="evidence" value="ECO:0007669"/>
    <property type="project" value="UniProtKB-KW"/>
</dbReference>
<dbReference type="GO" id="GO:0042773">
    <property type="term" value="P:ATP synthesis coupled electron transport"/>
    <property type="evidence" value="ECO:0007669"/>
    <property type="project" value="InterPro"/>
</dbReference>
<dbReference type="GO" id="GO:0015990">
    <property type="term" value="P:electron transport coupled proton transport"/>
    <property type="evidence" value="ECO:0007669"/>
    <property type="project" value="TreeGrafter"/>
</dbReference>
<dbReference type="Gene3D" id="1.20.5.2700">
    <property type="match status" value="1"/>
</dbReference>
<dbReference type="InterPro" id="IPR018393">
    <property type="entry name" value="NADHpl_OxRdtase_5_subgr"/>
</dbReference>
<dbReference type="InterPro" id="IPR001750">
    <property type="entry name" value="ND/Mrp_TM"/>
</dbReference>
<dbReference type="InterPro" id="IPR003945">
    <property type="entry name" value="NU5C-like"/>
</dbReference>
<dbReference type="InterPro" id="IPR001516">
    <property type="entry name" value="Proton_antipo_N"/>
</dbReference>
<dbReference type="NCBIfam" id="TIGR01974">
    <property type="entry name" value="NDH_I_L"/>
    <property type="match status" value="1"/>
</dbReference>
<dbReference type="NCBIfam" id="NF005141">
    <property type="entry name" value="PRK06590.1"/>
    <property type="match status" value="1"/>
</dbReference>
<dbReference type="PANTHER" id="PTHR42829">
    <property type="entry name" value="NADH-UBIQUINONE OXIDOREDUCTASE CHAIN 5"/>
    <property type="match status" value="1"/>
</dbReference>
<dbReference type="PANTHER" id="PTHR42829:SF2">
    <property type="entry name" value="NADH-UBIQUINONE OXIDOREDUCTASE CHAIN 5"/>
    <property type="match status" value="1"/>
</dbReference>
<dbReference type="Pfam" id="PF00361">
    <property type="entry name" value="Proton_antipo_M"/>
    <property type="match status" value="1"/>
</dbReference>
<dbReference type="Pfam" id="PF00662">
    <property type="entry name" value="Proton_antipo_N"/>
    <property type="match status" value="1"/>
</dbReference>
<dbReference type="PRINTS" id="PR01434">
    <property type="entry name" value="NADHDHGNASE5"/>
</dbReference>
<dbReference type="PRINTS" id="PR01435">
    <property type="entry name" value="NPOXDRDTASE5"/>
</dbReference>
<accession>Q9JX92</accession>
<accession>A1INM4</accession>
<gene>
    <name type="primary">nuoL</name>
    <name type="ordered locus">NMA0002</name>
</gene>
<evidence type="ECO:0000250" key="1"/>
<evidence type="ECO:0000255" key="2"/>
<evidence type="ECO:0000305" key="3"/>
<organism>
    <name type="scientific">Neisseria meningitidis serogroup A / serotype 4A (strain DSM 15465 / Z2491)</name>
    <dbReference type="NCBI Taxonomy" id="122587"/>
    <lineage>
        <taxon>Bacteria</taxon>
        <taxon>Pseudomonadati</taxon>
        <taxon>Pseudomonadota</taxon>
        <taxon>Betaproteobacteria</taxon>
        <taxon>Neisseriales</taxon>
        <taxon>Neisseriaceae</taxon>
        <taxon>Neisseria</taxon>
    </lineage>
</organism>
<protein>
    <recommendedName>
        <fullName>NADH-quinone oxidoreductase subunit L</fullName>
        <ecNumber>7.1.1.-</ecNumber>
    </recommendedName>
    <alternativeName>
        <fullName>NADH dehydrogenase I subunit L</fullName>
    </alternativeName>
    <alternativeName>
        <fullName>NDH-1 subunit L</fullName>
    </alternativeName>
</protein>
<sequence length="674" mass="74259">MNDMTLYLIIALVPLAGSLIAGLFGNKIGRAGAHTVTILGVAVSAVLSAYVLWGFLNGSRAKFDENVYTWLTMGGLDFSVGFLVDTMTAMMMVVVTGVSLMVHIYTIGYMHDEKVGYQRFFSYISLFTFSMLMLIMSNNFIQLFFGWEAVGLVSYLLIGFYFKRPSATFANLKAFLINRVGDFGFLLGIGLVLAYFGGSLRYQDVFAYLPNVQNATIQLFPGVEWSLITVTCLLLFVGAMGKSAQFPLHVWLPDSMEGPTPISALIHAATMVTAGLFMVSRMSPIYEMSSTALSVIMVIGAITALFMGFLGVIQNDIKRVVAYSTLSQLGYMTVALGASAYSVAMFHVMTHAFFKALLFLAAGSAIIGMHHDQDMRHMGNLKKYMPITWLTMLIGNLSLIGTPFFSGFYSKDSIIEAAKYSTLPGSGFAYFAVLASVFVTAFYAFRQYFMVFHGEEKWRSLPEHHSDGHGEEHHGLGKNDNPHESPLVVTLPLILLAVPSVIIGYIAIEPMLYGDFFKDVIFVNADAHPTMHIMKEEFHGALAMVSHSLHSPVLYLAIAGVLSAWLLYVKLPHLPAKIAQAFRPVYVLFENKYYLDALYFNVFAKGTRALGTFFWKVGDTAIIDNGIVNGSARLVGAVAAQVRKVQTGFIYTYAAAMVFGVLVLLGMTFWGLFR</sequence>
<proteinExistence type="inferred from homology"/>
<name>NUOL_NEIMA</name>
<keyword id="KW-1003">Cell membrane</keyword>
<keyword id="KW-0472">Membrane</keyword>
<keyword id="KW-0520">NAD</keyword>
<keyword id="KW-0874">Quinone</keyword>
<keyword id="KW-1278">Translocase</keyword>
<keyword id="KW-0812">Transmembrane</keyword>
<keyword id="KW-1133">Transmembrane helix</keyword>
<keyword id="KW-0830">Ubiquinone</keyword>